<accession>Q6MTG1</accession>
<organism>
    <name type="scientific">Mycoplasma mycoides subsp. mycoides SC (strain CCUG 32753 / NCTC 10114 / PG1)</name>
    <dbReference type="NCBI Taxonomy" id="272632"/>
    <lineage>
        <taxon>Bacteria</taxon>
        <taxon>Bacillati</taxon>
        <taxon>Mycoplasmatota</taxon>
        <taxon>Mollicutes</taxon>
        <taxon>Mycoplasmataceae</taxon>
        <taxon>Mycoplasma</taxon>
    </lineage>
</organism>
<protein>
    <recommendedName>
        <fullName evidence="1">tRNA-specific 2-thiouridylase MnmA</fullName>
        <ecNumber evidence="1">2.8.1.13</ecNumber>
    </recommendedName>
</protein>
<gene>
    <name evidence="1" type="primary">mnmA</name>
    <name type="ordered locus">MSC_0447</name>
</gene>
<dbReference type="EC" id="2.8.1.13" evidence="1"/>
<dbReference type="EMBL" id="BX293980">
    <property type="protein sequence ID" value="CAE77075.1"/>
    <property type="molecule type" value="Genomic_DNA"/>
</dbReference>
<dbReference type="RefSeq" id="NP_975433.1">
    <property type="nucleotide sequence ID" value="NC_005364.2"/>
</dbReference>
<dbReference type="RefSeq" id="WP_011166631.1">
    <property type="nucleotide sequence ID" value="NC_005364.2"/>
</dbReference>
<dbReference type="SMR" id="Q6MTG1"/>
<dbReference type="STRING" id="272632.MSC_0447"/>
<dbReference type="KEGG" id="mmy:MSC_0447"/>
<dbReference type="PATRIC" id="fig|272632.4.peg.487"/>
<dbReference type="eggNOG" id="COG0482">
    <property type="taxonomic scope" value="Bacteria"/>
</dbReference>
<dbReference type="HOGENOM" id="CLU_035188_1_0_14"/>
<dbReference type="Proteomes" id="UP000001016">
    <property type="component" value="Chromosome"/>
</dbReference>
<dbReference type="GO" id="GO:0005737">
    <property type="term" value="C:cytoplasm"/>
    <property type="evidence" value="ECO:0007669"/>
    <property type="project" value="UniProtKB-SubCell"/>
</dbReference>
<dbReference type="GO" id="GO:0005524">
    <property type="term" value="F:ATP binding"/>
    <property type="evidence" value="ECO:0007669"/>
    <property type="project" value="UniProtKB-KW"/>
</dbReference>
<dbReference type="GO" id="GO:0000049">
    <property type="term" value="F:tRNA binding"/>
    <property type="evidence" value="ECO:0007669"/>
    <property type="project" value="UniProtKB-KW"/>
</dbReference>
<dbReference type="GO" id="GO:0103016">
    <property type="term" value="F:tRNA-uridine 2-sulfurtransferase activity"/>
    <property type="evidence" value="ECO:0007669"/>
    <property type="project" value="UniProtKB-EC"/>
</dbReference>
<dbReference type="GO" id="GO:0002143">
    <property type="term" value="P:tRNA wobble position uridine thiolation"/>
    <property type="evidence" value="ECO:0007669"/>
    <property type="project" value="TreeGrafter"/>
</dbReference>
<dbReference type="CDD" id="cd01998">
    <property type="entry name" value="MnmA_TRMU-like"/>
    <property type="match status" value="1"/>
</dbReference>
<dbReference type="FunFam" id="2.30.30.280:FF:000001">
    <property type="entry name" value="tRNA-specific 2-thiouridylase MnmA"/>
    <property type="match status" value="1"/>
</dbReference>
<dbReference type="FunFam" id="2.40.30.10:FF:000023">
    <property type="entry name" value="tRNA-specific 2-thiouridylase MnmA"/>
    <property type="match status" value="1"/>
</dbReference>
<dbReference type="FunFam" id="3.40.50.620:FF:000004">
    <property type="entry name" value="tRNA-specific 2-thiouridylase MnmA"/>
    <property type="match status" value="1"/>
</dbReference>
<dbReference type="Gene3D" id="2.30.30.280">
    <property type="entry name" value="Adenine nucleotide alpha hydrolases-like domains"/>
    <property type="match status" value="1"/>
</dbReference>
<dbReference type="Gene3D" id="3.40.50.620">
    <property type="entry name" value="HUPs"/>
    <property type="match status" value="1"/>
</dbReference>
<dbReference type="Gene3D" id="2.40.30.10">
    <property type="entry name" value="Translation factors"/>
    <property type="match status" value="1"/>
</dbReference>
<dbReference type="HAMAP" id="MF_00144">
    <property type="entry name" value="tRNA_thiouridyl_MnmA"/>
    <property type="match status" value="1"/>
</dbReference>
<dbReference type="InterPro" id="IPR004506">
    <property type="entry name" value="MnmA-like"/>
</dbReference>
<dbReference type="InterPro" id="IPR046885">
    <property type="entry name" value="MnmA-like_C"/>
</dbReference>
<dbReference type="InterPro" id="IPR046884">
    <property type="entry name" value="MnmA-like_central"/>
</dbReference>
<dbReference type="InterPro" id="IPR023382">
    <property type="entry name" value="MnmA-like_central_sf"/>
</dbReference>
<dbReference type="InterPro" id="IPR014729">
    <property type="entry name" value="Rossmann-like_a/b/a_fold"/>
</dbReference>
<dbReference type="NCBIfam" id="NF001138">
    <property type="entry name" value="PRK00143.1"/>
    <property type="match status" value="1"/>
</dbReference>
<dbReference type="NCBIfam" id="TIGR00420">
    <property type="entry name" value="trmU"/>
    <property type="match status" value="1"/>
</dbReference>
<dbReference type="PANTHER" id="PTHR11933:SF5">
    <property type="entry name" value="MITOCHONDRIAL TRNA-SPECIFIC 2-THIOURIDYLASE 1"/>
    <property type="match status" value="1"/>
</dbReference>
<dbReference type="PANTHER" id="PTHR11933">
    <property type="entry name" value="TRNA 5-METHYLAMINOMETHYL-2-THIOURIDYLATE -METHYLTRANSFERASE"/>
    <property type="match status" value="1"/>
</dbReference>
<dbReference type="Pfam" id="PF03054">
    <property type="entry name" value="tRNA_Me_trans"/>
    <property type="match status" value="1"/>
</dbReference>
<dbReference type="Pfam" id="PF20258">
    <property type="entry name" value="tRNA_Me_trans_C"/>
    <property type="match status" value="1"/>
</dbReference>
<dbReference type="Pfam" id="PF20259">
    <property type="entry name" value="tRNA_Me_trans_M"/>
    <property type="match status" value="1"/>
</dbReference>
<dbReference type="SUPFAM" id="SSF52402">
    <property type="entry name" value="Adenine nucleotide alpha hydrolases-like"/>
    <property type="match status" value="1"/>
</dbReference>
<keyword id="KW-0067">ATP-binding</keyword>
<keyword id="KW-0963">Cytoplasm</keyword>
<keyword id="KW-1015">Disulfide bond</keyword>
<keyword id="KW-0547">Nucleotide-binding</keyword>
<keyword id="KW-1185">Reference proteome</keyword>
<keyword id="KW-0694">RNA-binding</keyword>
<keyword id="KW-0808">Transferase</keyword>
<keyword id="KW-0819">tRNA processing</keyword>
<keyword id="KW-0820">tRNA-binding</keyword>
<proteinExistence type="inferred from homology"/>
<name>MNMA_MYCMS</name>
<comment type="function">
    <text evidence="1">Catalyzes the 2-thiolation of uridine at the wobble position (U34) of tRNA, leading to the formation of s(2)U34.</text>
</comment>
<comment type="catalytic activity">
    <reaction evidence="1">
        <text>S-sulfanyl-L-cysteinyl-[protein] + uridine(34) in tRNA + AH2 + ATP = 2-thiouridine(34) in tRNA + L-cysteinyl-[protein] + A + AMP + diphosphate + H(+)</text>
        <dbReference type="Rhea" id="RHEA:47032"/>
        <dbReference type="Rhea" id="RHEA-COMP:10131"/>
        <dbReference type="Rhea" id="RHEA-COMP:11726"/>
        <dbReference type="Rhea" id="RHEA-COMP:11727"/>
        <dbReference type="Rhea" id="RHEA-COMP:11728"/>
        <dbReference type="ChEBI" id="CHEBI:13193"/>
        <dbReference type="ChEBI" id="CHEBI:15378"/>
        <dbReference type="ChEBI" id="CHEBI:17499"/>
        <dbReference type="ChEBI" id="CHEBI:29950"/>
        <dbReference type="ChEBI" id="CHEBI:30616"/>
        <dbReference type="ChEBI" id="CHEBI:33019"/>
        <dbReference type="ChEBI" id="CHEBI:61963"/>
        <dbReference type="ChEBI" id="CHEBI:65315"/>
        <dbReference type="ChEBI" id="CHEBI:87170"/>
        <dbReference type="ChEBI" id="CHEBI:456215"/>
        <dbReference type="EC" id="2.8.1.13"/>
    </reaction>
</comment>
<comment type="subcellular location">
    <subcellularLocation>
        <location evidence="1">Cytoplasm</location>
    </subcellularLocation>
</comment>
<comment type="similarity">
    <text evidence="1">Belongs to the MnmA/TRMU family.</text>
</comment>
<sequence length="375" mass="43199">MKQKVIVGLSGGVDSSVACYLLLEQGYEVEGLFMRNWDSATNNDILGNRNINDDICPQEQDYLDAKAVADKLNIKLYRVDFIKEYWDYVFSYFIEEYKKARTPNPDILCNKYIKFDKFLNYAINQLNADYIAMGHYAKVEFNKTTNQYELIKASDTNKDQTYFLSQLNQKQLSKTLFPLANLTKEQVRKIALKQNLITANKKDSTGICFIGERSFTNFLQNYIPNQTGDIVDIKTNKVLGQHIGVMYYTIGQRKGINLSGMSEPYYVADKDVKKNILYVCSTSDQSYLHSTSCLVNDINWILDISKYVDDINQFECQAKFRYRQIDNKVVVKKIDDNNYQVIFKKPLKAITIGQQAVFYLNDICLGGAVIDKVIK</sequence>
<reference key="1">
    <citation type="journal article" date="2004" name="Genome Res.">
        <title>The genome sequence of Mycoplasma mycoides subsp. mycoides SC type strain PG1T, the causative agent of contagious bovine pleuropneumonia (CBPP).</title>
        <authorList>
            <person name="Westberg J."/>
            <person name="Persson A."/>
            <person name="Holmberg A."/>
            <person name="Goesmann A."/>
            <person name="Lundeberg J."/>
            <person name="Johansson K.-E."/>
            <person name="Pettersson B."/>
            <person name="Uhlen M."/>
        </authorList>
    </citation>
    <scope>NUCLEOTIDE SEQUENCE [LARGE SCALE GENOMIC DNA]</scope>
    <source>
        <strain>CCUG 32753 / NCTC 10114 / PG1</strain>
    </source>
</reference>
<feature type="chain" id="PRO_0000349708" description="tRNA-specific 2-thiouridylase MnmA">
    <location>
        <begin position="1"/>
        <end position="375"/>
    </location>
</feature>
<feature type="region of interest" description="Interaction with target base in tRNA" evidence="1">
    <location>
        <begin position="104"/>
        <end position="106"/>
    </location>
</feature>
<feature type="region of interest" description="Interaction with tRNA" evidence="1">
    <location>
        <begin position="158"/>
        <end position="160"/>
    </location>
</feature>
<feature type="region of interest" description="Interaction with tRNA" evidence="1">
    <location>
        <begin position="321"/>
        <end position="322"/>
    </location>
</feature>
<feature type="active site" description="Nucleophile" evidence="1">
    <location>
        <position position="109"/>
    </location>
</feature>
<feature type="active site" description="Cysteine persulfide intermediate" evidence="1">
    <location>
        <position position="208"/>
    </location>
</feature>
<feature type="binding site" evidence="1">
    <location>
        <begin position="8"/>
        <end position="15"/>
    </location>
    <ligand>
        <name>ATP</name>
        <dbReference type="ChEBI" id="CHEBI:30616"/>
    </ligand>
</feature>
<feature type="binding site" evidence="1">
    <location>
        <position position="34"/>
    </location>
    <ligand>
        <name>ATP</name>
        <dbReference type="ChEBI" id="CHEBI:30616"/>
    </ligand>
</feature>
<feature type="binding site" evidence="1">
    <location>
        <position position="134"/>
    </location>
    <ligand>
        <name>ATP</name>
        <dbReference type="ChEBI" id="CHEBI:30616"/>
    </ligand>
</feature>
<feature type="site" description="Interaction with tRNA" evidence="1">
    <location>
        <position position="135"/>
    </location>
</feature>
<feature type="site" description="Interaction with tRNA" evidence="1">
    <location>
        <position position="354"/>
    </location>
</feature>
<feature type="disulfide bond" description="Alternate" evidence="1">
    <location>
        <begin position="109"/>
        <end position="208"/>
    </location>
</feature>
<evidence type="ECO:0000255" key="1">
    <source>
        <dbReference type="HAMAP-Rule" id="MF_00144"/>
    </source>
</evidence>